<sequence>MKELLRKWNNISLVKRILMGLIIGIMLALWIPDIAAPVAILGNLFVGALKAVAPVLVLILVMGAIANHKSGQQTNMKSILILYLLGTFLAGVTAVIASFMFPVSIALAAGAEDITAPGGITEVLLSLLMNVVDNPVKALMNANYIGILSWAILLGLALRTAGESTKQLIGDFADAVSKVVKWVINLAPLGILGLVFDSIATSGLEVLLGYGKLLLLLVGCMVFVALIINPLIVYLKIRKNPYPLVFRCLRESGITAFFTRSSAANIPVNLTLCEKLGLDRNTYSISIPLGATINMAGAAVTIAVLTLAAVHTLGITVDIPTAIILSVLSAIAACGASGVAGGSLLLIPLACSLFGISNDIAMQVVGVGFIIGVVQDSCETALNSSTDVLFTAAAEYGEWRKEGKAF</sequence>
<comment type="function">
    <text evidence="1">Involved in the import of serine and threonine into the cell, with the concomitant import of sodium (symport system).</text>
</comment>
<comment type="catalytic activity">
    <reaction evidence="1">
        <text>L-serine(in) + Na(+)(in) = L-serine(out) + Na(+)(out)</text>
        <dbReference type="Rhea" id="RHEA:29575"/>
        <dbReference type="ChEBI" id="CHEBI:29101"/>
        <dbReference type="ChEBI" id="CHEBI:33384"/>
    </reaction>
    <physiologicalReaction direction="right-to-left" evidence="1">
        <dbReference type="Rhea" id="RHEA:29577"/>
    </physiologicalReaction>
</comment>
<comment type="catalytic activity">
    <reaction evidence="1">
        <text>L-threonine(in) + Na(+)(in) = L-threonine(out) + Na(+)(out)</text>
        <dbReference type="Rhea" id="RHEA:69999"/>
        <dbReference type="ChEBI" id="CHEBI:29101"/>
        <dbReference type="ChEBI" id="CHEBI:57926"/>
    </reaction>
    <physiologicalReaction direction="right-to-left" evidence="1">
        <dbReference type="Rhea" id="RHEA:70001"/>
    </physiologicalReaction>
</comment>
<comment type="subcellular location">
    <subcellularLocation>
        <location evidence="1">Cell membrane</location>
        <topology evidence="1">Multi-pass membrane protein</topology>
    </subcellularLocation>
</comment>
<comment type="similarity">
    <text evidence="1">Belongs to the dicarboxylate/amino acid:cation symporter (DAACS) (TC 2.A.23) family.</text>
</comment>
<protein>
    <recommendedName>
        <fullName evidence="1">Serine/threonine transporter SstT</fullName>
    </recommendedName>
    <alternativeName>
        <fullName evidence="1">Na(+)/serine-threonine symporter</fullName>
    </alternativeName>
</protein>
<name>SSTT_DESHY</name>
<gene>
    <name evidence="1" type="primary">sstT</name>
    <name type="ordered locus">DSY1523</name>
</gene>
<feature type="chain" id="PRO_0000309082" description="Serine/threonine transporter SstT">
    <location>
        <begin position="1"/>
        <end position="406"/>
    </location>
</feature>
<feature type="transmembrane region" description="Helical" evidence="1">
    <location>
        <begin position="21"/>
        <end position="41"/>
    </location>
</feature>
<feature type="transmembrane region" description="Helical" evidence="1">
    <location>
        <begin position="45"/>
        <end position="65"/>
    </location>
</feature>
<feature type="transmembrane region" description="Helical" evidence="1">
    <location>
        <begin position="79"/>
        <end position="99"/>
    </location>
</feature>
<feature type="transmembrane region" description="Helical" evidence="1">
    <location>
        <begin position="138"/>
        <end position="158"/>
    </location>
</feature>
<feature type="transmembrane region" description="Helical" evidence="1">
    <location>
        <begin position="179"/>
        <end position="199"/>
    </location>
</feature>
<feature type="transmembrane region" description="Helical" evidence="1">
    <location>
        <begin position="213"/>
        <end position="233"/>
    </location>
</feature>
<feature type="transmembrane region" description="Helical" evidence="1">
    <location>
        <begin position="285"/>
        <end position="305"/>
    </location>
</feature>
<feature type="transmembrane region" description="Helical" evidence="1">
    <location>
        <begin position="313"/>
        <end position="333"/>
    </location>
</feature>
<feature type="transmembrane region" description="Helical" evidence="1">
    <location>
        <begin position="360"/>
        <end position="380"/>
    </location>
</feature>
<accession>Q24XD0</accession>
<evidence type="ECO:0000255" key="1">
    <source>
        <dbReference type="HAMAP-Rule" id="MF_01582"/>
    </source>
</evidence>
<reference key="1">
    <citation type="journal article" date="2006" name="J. Bacteriol.">
        <title>Complete genome sequence of the dehalorespiring bacterium Desulfitobacterium hafniense Y51 and comparison with Dehalococcoides ethenogenes 195.</title>
        <authorList>
            <person name="Nonaka H."/>
            <person name="Keresztes G."/>
            <person name="Shinoda Y."/>
            <person name="Ikenaga Y."/>
            <person name="Abe M."/>
            <person name="Naito K."/>
            <person name="Inatomi K."/>
            <person name="Furukawa K."/>
            <person name="Inui M."/>
            <person name="Yukawa H."/>
        </authorList>
    </citation>
    <scope>NUCLEOTIDE SEQUENCE [LARGE SCALE GENOMIC DNA]</scope>
    <source>
        <strain>Y51</strain>
    </source>
</reference>
<proteinExistence type="inferred from homology"/>
<dbReference type="EMBL" id="AP008230">
    <property type="protein sequence ID" value="BAE83312.1"/>
    <property type="molecule type" value="Genomic_DNA"/>
</dbReference>
<dbReference type="RefSeq" id="WP_005811470.1">
    <property type="nucleotide sequence ID" value="NC_007907.1"/>
</dbReference>
<dbReference type="SMR" id="Q24XD0"/>
<dbReference type="STRING" id="138119.DSY1523"/>
<dbReference type="KEGG" id="dsy:DSY1523"/>
<dbReference type="eggNOG" id="COG3633">
    <property type="taxonomic scope" value="Bacteria"/>
</dbReference>
<dbReference type="HOGENOM" id="CLU_044581_0_0_9"/>
<dbReference type="Proteomes" id="UP000001946">
    <property type="component" value="Chromosome"/>
</dbReference>
<dbReference type="GO" id="GO:0005886">
    <property type="term" value="C:plasma membrane"/>
    <property type="evidence" value="ECO:0007669"/>
    <property type="project" value="UniProtKB-SubCell"/>
</dbReference>
<dbReference type="GO" id="GO:0005295">
    <property type="term" value="F:neutral L-amino acid:sodium symporter activity"/>
    <property type="evidence" value="ECO:0007669"/>
    <property type="project" value="TreeGrafter"/>
</dbReference>
<dbReference type="GO" id="GO:0032329">
    <property type="term" value="P:serine transport"/>
    <property type="evidence" value="ECO:0007669"/>
    <property type="project" value="InterPro"/>
</dbReference>
<dbReference type="GO" id="GO:0015826">
    <property type="term" value="P:threonine transport"/>
    <property type="evidence" value="ECO:0007669"/>
    <property type="project" value="InterPro"/>
</dbReference>
<dbReference type="FunFam" id="1.10.3860.10:FF:000003">
    <property type="entry name" value="Serine/threonine transporter sstT"/>
    <property type="match status" value="1"/>
</dbReference>
<dbReference type="Gene3D" id="1.10.3860.10">
    <property type="entry name" value="Sodium:dicarboxylate symporter"/>
    <property type="match status" value="1"/>
</dbReference>
<dbReference type="HAMAP" id="MF_01582">
    <property type="entry name" value="Ser_Thr_transp_SstT"/>
    <property type="match status" value="1"/>
</dbReference>
<dbReference type="InterPro" id="IPR001991">
    <property type="entry name" value="Na-dicarboxylate_symporter"/>
</dbReference>
<dbReference type="InterPro" id="IPR036458">
    <property type="entry name" value="Na:dicarbo_symporter_sf"/>
</dbReference>
<dbReference type="InterPro" id="IPR023025">
    <property type="entry name" value="Ser_Thr_transp_SstT"/>
</dbReference>
<dbReference type="NCBIfam" id="NF010151">
    <property type="entry name" value="PRK13628.1"/>
    <property type="match status" value="1"/>
</dbReference>
<dbReference type="PANTHER" id="PTHR42865">
    <property type="entry name" value="PROTON/GLUTAMATE-ASPARTATE SYMPORTER"/>
    <property type="match status" value="1"/>
</dbReference>
<dbReference type="PANTHER" id="PTHR42865:SF8">
    <property type="entry name" value="SERINE_THREONINE TRANSPORTER SSTT"/>
    <property type="match status" value="1"/>
</dbReference>
<dbReference type="Pfam" id="PF00375">
    <property type="entry name" value="SDF"/>
    <property type="match status" value="1"/>
</dbReference>
<dbReference type="PRINTS" id="PR00173">
    <property type="entry name" value="EDTRNSPORT"/>
</dbReference>
<dbReference type="SUPFAM" id="SSF118215">
    <property type="entry name" value="Proton glutamate symport protein"/>
    <property type="match status" value="1"/>
</dbReference>
<keyword id="KW-0029">Amino-acid transport</keyword>
<keyword id="KW-1003">Cell membrane</keyword>
<keyword id="KW-0472">Membrane</keyword>
<keyword id="KW-1185">Reference proteome</keyword>
<keyword id="KW-0769">Symport</keyword>
<keyword id="KW-0812">Transmembrane</keyword>
<keyword id="KW-1133">Transmembrane helix</keyword>
<keyword id="KW-0813">Transport</keyword>
<organism>
    <name type="scientific">Desulfitobacterium hafniense (strain Y51)</name>
    <dbReference type="NCBI Taxonomy" id="138119"/>
    <lineage>
        <taxon>Bacteria</taxon>
        <taxon>Bacillati</taxon>
        <taxon>Bacillota</taxon>
        <taxon>Clostridia</taxon>
        <taxon>Eubacteriales</taxon>
        <taxon>Desulfitobacteriaceae</taxon>
        <taxon>Desulfitobacterium</taxon>
    </lineage>
</organism>